<keyword id="KW-1185">Reference proteome</keyword>
<comment type="similarity">
    <text evidence="1">Belongs to the UPF0275 family.</text>
</comment>
<name>Y493_PASMU</name>
<proteinExistence type="inferred from homology"/>
<protein>
    <recommendedName>
        <fullName>UPF0275 protein PM0493</fullName>
    </recommendedName>
</protein>
<organism>
    <name type="scientific">Pasteurella multocida (strain Pm70)</name>
    <dbReference type="NCBI Taxonomy" id="272843"/>
    <lineage>
        <taxon>Bacteria</taxon>
        <taxon>Pseudomonadati</taxon>
        <taxon>Pseudomonadota</taxon>
        <taxon>Gammaproteobacteria</taxon>
        <taxon>Pasteurellales</taxon>
        <taxon>Pasteurellaceae</taxon>
        <taxon>Pasteurella</taxon>
    </lineage>
</organism>
<dbReference type="EMBL" id="AE004439">
    <property type="protein sequence ID" value="AAK02577.1"/>
    <property type="molecule type" value="Genomic_DNA"/>
</dbReference>
<dbReference type="RefSeq" id="WP_010906681.1">
    <property type="nucleotide sequence ID" value="NC_002663.1"/>
</dbReference>
<dbReference type="EnsemblBacteria" id="AAK02577">
    <property type="protein sequence ID" value="AAK02577"/>
    <property type="gene ID" value="PM0493"/>
</dbReference>
<dbReference type="KEGG" id="pmu:PM0493"/>
<dbReference type="PATRIC" id="fig|272843.6.peg.503"/>
<dbReference type="HOGENOM" id="CLU_147996_0_0_6"/>
<dbReference type="OrthoDB" id="89406at2"/>
<dbReference type="Proteomes" id="UP000000809">
    <property type="component" value="Chromosome"/>
</dbReference>
<dbReference type="InterPro" id="IPR035416">
    <property type="entry name" value="DUF5376"/>
</dbReference>
<dbReference type="Pfam" id="PF17346">
    <property type="entry name" value="DUF5376"/>
    <property type="match status" value="1"/>
</dbReference>
<evidence type="ECO:0000305" key="1"/>
<reference key="1">
    <citation type="journal article" date="2001" name="Proc. Natl. Acad. Sci. U.S.A.">
        <title>Complete genomic sequence of Pasteurella multocida Pm70.</title>
        <authorList>
            <person name="May B.J."/>
            <person name="Zhang Q."/>
            <person name="Li L.L."/>
            <person name="Paustian M.L."/>
            <person name="Whittam T.S."/>
            <person name="Kapur V."/>
        </authorList>
    </citation>
    <scope>NUCLEOTIDE SEQUENCE [LARGE SCALE GENOMIC DNA]</scope>
    <source>
        <strain>Pm70</strain>
    </source>
</reference>
<feature type="chain" id="PRO_0000220583" description="UPF0275 protein PM0493">
    <location>
        <begin position="1"/>
        <end position="136"/>
    </location>
</feature>
<sequence>MKLVFSHVYDKSGNYIFPYCSPEESTIDYDSEEYVSRYITFHPNDVLEELYDESITNRFIGVDEIEALIDYENVKIGHWLYEEGCELEDYDPEETTYVVISRKELIYLLEKWDEFLAKPIIDPHYQEIIDTKEAYL</sequence>
<gene>
    <name type="ordered locus">PM0493</name>
</gene>
<accession>Q9CND9</accession>